<accession>Q491U9</accession>
<feature type="chain" id="PRO_1000021802" description="Homoserine O-succinyltransferase">
    <location>
        <begin position="1"/>
        <end position="304"/>
    </location>
</feature>
<feature type="active site" description="Acyl-thioester intermediate" evidence="1">
    <location>
        <position position="142"/>
    </location>
</feature>
<feature type="active site" description="Proton acceptor" evidence="1">
    <location>
        <position position="235"/>
    </location>
</feature>
<feature type="active site" evidence="1">
    <location>
        <position position="237"/>
    </location>
</feature>
<feature type="binding site" evidence="1">
    <location>
        <position position="163"/>
    </location>
    <ligand>
        <name>substrate</name>
    </ligand>
</feature>
<feature type="binding site" evidence="1">
    <location>
        <position position="192"/>
    </location>
    <ligand>
        <name>substrate</name>
    </ligand>
</feature>
<feature type="binding site" evidence="1">
    <location>
        <position position="249"/>
    </location>
    <ligand>
        <name>substrate</name>
    </ligand>
</feature>
<feature type="site" description="Important for acyl-CoA specificity" evidence="1">
    <location>
        <position position="111"/>
    </location>
</feature>
<feature type="site" description="Important for substrate specificity" evidence="1">
    <location>
        <position position="192"/>
    </location>
</feature>
<sequence>MPVQVLNRLPAIKILQNEDVFVMQKSRNTFKEQSSLKVLILNLMPKKIETENQLLRLLSNSPLQIDIQLLRIDGHIPKNTPVEHLNNFYCSFPDIRYKNFDGLIVTGAPLGLINFENITFWPQIEQLFLWAKEHINSILFICWAVQAALKVLYNLPKFTRKRKLVGIYQHNTINSHALLTKGFDEKFLAPHSRYSDFPKDIIYRNTDLEILAESDEAGAYLLMSQDKRLIFITGHPEYDAMTLSQEYYRDLKLGLSPKLPDHYFPQDNPNLVPKISWRSHAYLLFANWLNYYVQQNVIKHLSSF</sequence>
<comment type="function">
    <text evidence="1">Transfers a succinyl group from succinyl-CoA to L-homoserine, forming succinyl-L-homoserine.</text>
</comment>
<comment type="catalytic activity">
    <reaction evidence="1">
        <text>L-homoserine + succinyl-CoA = O-succinyl-L-homoserine + CoA</text>
        <dbReference type="Rhea" id="RHEA:22008"/>
        <dbReference type="ChEBI" id="CHEBI:57287"/>
        <dbReference type="ChEBI" id="CHEBI:57292"/>
        <dbReference type="ChEBI" id="CHEBI:57476"/>
        <dbReference type="ChEBI" id="CHEBI:57661"/>
        <dbReference type="EC" id="2.3.1.46"/>
    </reaction>
</comment>
<comment type="pathway">
    <text evidence="1">Amino-acid biosynthesis; L-methionine biosynthesis via de novo pathway; O-succinyl-L-homoserine from L-homoserine: step 1/1.</text>
</comment>
<comment type="subcellular location">
    <subcellularLocation>
        <location evidence="1">Cytoplasm</location>
    </subcellularLocation>
</comment>
<comment type="similarity">
    <text evidence="1">Belongs to the MetA family.</text>
</comment>
<proteinExistence type="inferred from homology"/>
<organism>
    <name type="scientific">Blochmanniella pennsylvanica (strain BPEN)</name>
    <dbReference type="NCBI Taxonomy" id="291272"/>
    <lineage>
        <taxon>Bacteria</taxon>
        <taxon>Pseudomonadati</taxon>
        <taxon>Pseudomonadota</taxon>
        <taxon>Gammaproteobacteria</taxon>
        <taxon>Enterobacterales</taxon>
        <taxon>Enterobacteriaceae</taxon>
        <taxon>ant endosymbionts</taxon>
        <taxon>Candidatus Blochmanniella</taxon>
    </lineage>
</organism>
<protein>
    <recommendedName>
        <fullName evidence="1">Homoserine O-succinyltransferase</fullName>
        <shortName evidence="1">HST</shortName>
        <ecNumber evidence="1">2.3.1.46</ecNumber>
    </recommendedName>
    <alternativeName>
        <fullName evidence="1">Homoserine transsuccinylase</fullName>
        <shortName evidence="1">HTS</shortName>
    </alternativeName>
</protein>
<dbReference type="EC" id="2.3.1.46" evidence="1"/>
<dbReference type="EMBL" id="CP000016">
    <property type="protein sequence ID" value="AAZ41255.1"/>
    <property type="molecule type" value="Genomic_DNA"/>
</dbReference>
<dbReference type="RefSeq" id="WP_011283166.1">
    <property type="nucleotide sequence ID" value="NC_007292.1"/>
</dbReference>
<dbReference type="SMR" id="Q491U9"/>
<dbReference type="STRING" id="291272.BPEN_657"/>
<dbReference type="KEGG" id="bpn:BPEN_657"/>
<dbReference type="eggNOG" id="COG1897">
    <property type="taxonomic scope" value="Bacteria"/>
</dbReference>
<dbReference type="HOGENOM" id="CLU_057851_0_1_6"/>
<dbReference type="OrthoDB" id="9772423at2"/>
<dbReference type="UniPathway" id="UPA00051">
    <property type="reaction ID" value="UER00075"/>
</dbReference>
<dbReference type="Proteomes" id="UP000007794">
    <property type="component" value="Chromosome"/>
</dbReference>
<dbReference type="GO" id="GO:0005737">
    <property type="term" value="C:cytoplasm"/>
    <property type="evidence" value="ECO:0007669"/>
    <property type="project" value="UniProtKB-SubCell"/>
</dbReference>
<dbReference type="GO" id="GO:0004414">
    <property type="term" value="F:homoserine O-acetyltransferase activity"/>
    <property type="evidence" value="ECO:0007669"/>
    <property type="project" value="UniProtKB-UniRule"/>
</dbReference>
<dbReference type="GO" id="GO:0008899">
    <property type="term" value="F:homoserine O-succinyltransferase activity"/>
    <property type="evidence" value="ECO:0007669"/>
    <property type="project" value="UniProtKB-EC"/>
</dbReference>
<dbReference type="GO" id="GO:0019281">
    <property type="term" value="P:L-methionine biosynthetic process from homoserine via O-succinyl-L-homoserine and cystathionine"/>
    <property type="evidence" value="ECO:0007669"/>
    <property type="project" value="InterPro"/>
</dbReference>
<dbReference type="CDD" id="cd03131">
    <property type="entry name" value="GATase1_HTS"/>
    <property type="match status" value="1"/>
</dbReference>
<dbReference type="FunFam" id="3.40.50.880:FF:000004">
    <property type="entry name" value="Homoserine O-succinyltransferase"/>
    <property type="match status" value="1"/>
</dbReference>
<dbReference type="Gene3D" id="3.40.50.880">
    <property type="match status" value="1"/>
</dbReference>
<dbReference type="HAMAP" id="MF_00295">
    <property type="entry name" value="MetA_acyltransf"/>
    <property type="match status" value="1"/>
</dbReference>
<dbReference type="InterPro" id="IPR029062">
    <property type="entry name" value="Class_I_gatase-like"/>
</dbReference>
<dbReference type="InterPro" id="IPR005697">
    <property type="entry name" value="HST_MetA"/>
</dbReference>
<dbReference type="InterPro" id="IPR033752">
    <property type="entry name" value="MetA_family"/>
</dbReference>
<dbReference type="NCBIfam" id="TIGR01001">
    <property type="entry name" value="metA"/>
    <property type="match status" value="1"/>
</dbReference>
<dbReference type="PANTHER" id="PTHR20919">
    <property type="entry name" value="HOMOSERINE O-SUCCINYLTRANSFERASE"/>
    <property type="match status" value="1"/>
</dbReference>
<dbReference type="PANTHER" id="PTHR20919:SF0">
    <property type="entry name" value="HOMOSERINE O-SUCCINYLTRANSFERASE"/>
    <property type="match status" value="1"/>
</dbReference>
<dbReference type="Pfam" id="PF04204">
    <property type="entry name" value="HTS"/>
    <property type="match status" value="1"/>
</dbReference>
<dbReference type="PIRSF" id="PIRSF000450">
    <property type="entry name" value="H_ser_succinyltr"/>
    <property type="match status" value="1"/>
</dbReference>
<dbReference type="SUPFAM" id="SSF52317">
    <property type="entry name" value="Class I glutamine amidotransferase-like"/>
    <property type="match status" value="1"/>
</dbReference>
<name>METAS_BLOPB</name>
<keyword id="KW-0012">Acyltransferase</keyword>
<keyword id="KW-0028">Amino-acid biosynthesis</keyword>
<keyword id="KW-0963">Cytoplasm</keyword>
<keyword id="KW-0486">Methionine biosynthesis</keyword>
<keyword id="KW-1185">Reference proteome</keyword>
<keyword id="KW-0808">Transferase</keyword>
<reference key="1">
    <citation type="journal article" date="2005" name="Genome Res.">
        <title>Genome sequence of Blochmannia pennsylvanicus indicates parallel evolutionary trends among bacterial mutualists of insects.</title>
        <authorList>
            <person name="Degnan P.H."/>
            <person name="Lazarus A.B."/>
            <person name="Wernegreen J.J."/>
        </authorList>
    </citation>
    <scope>NUCLEOTIDE SEQUENCE [LARGE SCALE GENOMIC DNA]</scope>
    <source>
        <strain>BPEN</strain>
    </source>
</reference>
<gene>
    <name evidence="1" type="primary">metAS</name>
    <name type="ordered locus">BPEN_657</name>
</gene>
<evidence type="ECO:0000255" key="1">
    <source>
        <dbReference type="HAMAP-Rule" id="MF_00295"/>
    </source>
</evidence>